<protein>
    <recommendedName>
        <fullName evidence="1">Ribonuclease P protein component</fullName>
        <shortName evidence="1">RNase P protein</shortName>
        <shortName evidence="1">RNaseP protein</shortName>
        <ecNumber evidence="1">3.1.26.5</ecNumber>
    </recommendedName>
    <alternativeName>
        <fullName evidence="1">Protein C5</fullName>
    </alternativeName>
</protein>
<accession>Q5HS37</accession>
<proteinExistence type="inferred from homology"/>
<sequence length="115" mass="13484">MEKAYRIKRNSDFQAIYKNGKSVANRQFVVYTYKNRDLKHFRLGISVSKKLGNAVTRNRIKRAIRENFKVHKQNIIAKDIIVIARQPAKDMNTLEIQSSLEHVLKIAKVFNKKIK</sequence>
<name>RNPA_STAEQ</name>
<feature type="chain" id="PRO_0000198533" description="Ribonuclease P protein component">
    <location>
        <begin position="1"/>
        <end position="115"/>
    </location>
</feature>
<evidence type="ECO:0000255" key="1">
    <source>
        <dbReference type="HAMAP-Rule" id="MF_00227"/>
    </source>
</evidence>
<comment type="function">
    <text evidence="1">RNaseP catalyzes the removal of the 5'-leader sequence from pre-tRNA to produce the mature 5'-terminus. It can also cleave other RNA substrates such as 4.5S RNA. The protein component plays an auxiliary but essential role in vivo by binding to the 5'-leader sequence and broadening the substrate specificity of the ribozyme.</text>
</comment>
<comment type="catalytic activity">
    <reaction evidence="1">
        <text>Endonucleolytic cleavage of RNA, removing 5'-extranucleotides from tRNA precursor.</text>
        <dbReference type="EC" id="3.1.26.5"/>
    </reaction>
</comment>
<comment type="subunit">
    <text evidence="1">Consists of a catalytic RNA component (M1 or rnpB) and a protein subunit.</text>
</comment>
<comment type="similarity">
    <text evidence="1">Belongs to the RnpA family.</text>
</comment>
<dbReference type="EC" id="3.1.26.5" evidence="1"/>
<dbReference type="EMBL" id="CP000029">
    <property type="protein sequence ID" value="AAW53387.1"/>
    <property type="molecule type" value="Genomic_DNA"/>
</dbReference>
<dbReference type="RefSeq" id="WP_001832522.1">
    <property type="nucleotide sequence ID" value="NC_002976.3"/>
</dbReference>
<dbReference type="SMR" id="Q5HS37"/>
<dbReference type="STRING" id="176279.SERP0002"/>
<dbReference type="GeneID" id="50019723"/>
<dbReference type="KEGG" id="ser:SERP0002"/>
<dbReference type="eggNOG" id="COG0594">
    <property type="taxonomic scope" value="Bacteria"/>
</dbReference>
<dbReference type="HOGENOM" id="CLU_117179_9_1_9"/>
<dbReference type="Proteomes" id="UP000000531">
    <property type="component" value="Chromosome"/>
</dbReference>
<dbReference type="GO" id="GO:0030677">
    <property type="term" value="C:ribonuclease P complex"/>
    <property type="evidence" value="ECO:0007669"/>
    <property type="project" value="TreeGrafter"/>
</dbReference>
<dbReference type="GO" id="GO:0042781">
    <property type="term" value="F:3'-tRNA processing endoribonuclease activity"/>
    <property type="evidence" value="ECO:0007669"/>
    <property type="project" value="TreeGrafter"/>
</dbReference>
<dbReference type="GO" id="GO:0004526">
    <property type="term" value="F:ribonuclease P activity"/>
    <property type="evidence" value="ECO:0007669"/>
    <property type="project" value="UniProtKB-UniRule"/>
</dbReference>
<dbReference type="GO" id="GO:0000049">
    <property type="term" value="F:tRNA binding"/>
    <property type="evidence" value="ECO:0007669"/>
    <property type="project" value="UniProtKB-UniRule"/>
</dbReference>
<dbReference type="GO" id="GO:0001682">
    <property type="term" value="P:tRNA 5'-leader removal"/>
    <property type="evidence" value="ECO:0007669"/>
    <property type="project" value="UniProtKB-UniRule"/>
</dbReference>
<dbReference type="FunFam" id="3.30.230.10:FF:000021">
    <property type="entry name" value="Ribonuclease P protein component"/>
    <property type="match status" value="1"/>
</dbReference>
<dbReference type="Gene3D" id="3.30.230.10">
    <property type="match status" value="1"/>
</dbReference>
<dbReference type="HAMAP" id="MF_00227">
    <property type="entry name" value="RNase_P"/>
    <property type="match status" value="1"/>
</dbReference>
<dbReference type="InterPro" id="IPR020568">
    <property type="entry name" value="Ribosomal_Su5_D2-typ_SF"/>
</dbReference>
<dbReference type="InterPro" id="IPR014721">
    <property type="entry name" value="Ribsml_uS5_D2-typ_fold_subgr"/>
</dbReference>
<dbReference type="InterPro" id="IPR000100">
    <property type="entry name" value="RNase_P"/>
</dbReference>
<dbReference type="InterPro" id="IPR020539">
    <property type="entry name" value="RNase_P_CS"/>
</dbReference>
<dbReference type="NCBIfam" id="TIGR00188">
    <property type="entry name" value="rnpA"/>
    <property type="match status" value="1"/>
</dbReference>
<dbReference type="PANTHER" id="PTHR33992">
    <property type="entry name" value="RIBONUCLEASE P PROTEIN COMPONENT"/>
    <property type="match status" value="1"/>
</dbReference>
<dbReference type="PANTHER" id="PTHR33992:SF1">
    <property type="entry name" value="RIBONUCLEASE P PROTEIN COMPONENT"/>
    <property type="match status" value="1"/>
</dbReference>
<dbReference type="Pfam" id="PF00825">
    <property type="entry name" value="Ribonuclease_P"/>
    <property type="match status" value="1"/>
</dbReference>
<dbReference type="SUPFAM" id="SSF54211">
    <property type="entry name" value="Ribosomal protein S5 domain 2-like"/>
    <property type="match status" value="1"/>
</dbReference>
<dbReference type="PROSITE" id="PS00648">
    <property type="entry name" value="RIBONUCLEASE_P"/>
    <property type="match status" value="1"/>
</dbReference>
<reference key="1">
    <citation type="journal article" date="2005" name="J. Bacteriol.">
        <title>Insights on evolution of virulence and resistance from the complete genome analysis of an early methicillin-resistant Staphylococcus aureus strain and a biofilm-producing methicillin-resistant Staphylococcus epidermidis strain.</title>
        <authorList>
            <person name="Gill S.R."/>
            <person name="Fouts D.E."/>
            <person name="Archer G.L."/>
            <person name="Mongodin E.F."/>
            <person name="DeBoy R.T."/>
            <person name="Ravel J."/>
            <person name="Paulsen I.T."/>
            <person name="Kolonay J.F."/>
            <person name="Brinkac L.M."/>
            <person name="Beanan M.J."/>
            <person name="Dodson R.J."/>
            <person name="Daugherty S.C."/>
            <person name="Madupu R."/>
            <person name="Angiuoli S.V."/>
            <person name="Durkin A.S."/>
            <person name="Haft D.H."/>
            <person name="Vamathevan J.J."/>
            <person name="Khouri H."/>
            <person name="Utterback T.R."/>
            <person name="Lee C."/>
            <person name="Dimitrov G."/>
            <person name="Jiang L."/>
            <person name="Qin H."/>
            <person name="Weidman J."/>
            <person name="Tran K."/>
            <person name="Kang K.H."/>
            <person name="Hance I.R."/>
            <person name="Nelson K.E."/>
            <person name="Fraser C.M."/>
        </authorList>
    </citation>
    <scope>NUCLEOTIDE SEQUENCE [LARGE SCALE GENOMIC DNA]</scope>
    <source>
        <strain>ATCC 35984 / DSM 28319 / BCRC 17069 / CCUG 31568 / BM 3577 / RP62A</strain>
    </source>
</reference>
<gene>
    <name evidence="1" type="primary">rnpA</name>
    <name type="ordered locus">SERP0002</name>
</gene>
<organism>
    <name type="scientific">Staphylococcus epidermidis (strain ATCC 35984 / DSM 28319 / BCRC 17069 / CCUG 31568 / BM 3577 / RP62A)</name>
    <dbReference type="NCBI Taxonomy" id="176279"/>
    <lineage>
        <taxon>Bacteria</taxon>
        <taxon>Bacillati</taxon>
        <taxon>Bacillota</taxon>
        <taxon>Bacilli</taxon>
        <taxon>Bacillales</taxon>
        <taxon>Staphylococcaceae</taxon>
        <taxon>Staphylococcus</taxon>
    </lineage>
</organism>
<keyword id="KW-0255">Endonuclease</keyword>
<keyword id="KW-0378">Hydrolase</keyword>
<keyword id="KW-0540">Nuclease</keyword>
<keyword id="KW-1185">Reference proteome</keyword>
<keyword id="KW-0694">RNA-binding</keyword>
<keyword id="KW-0819">tRNA processing</keyword>